<comment type="function">
    <text>Putative function in synaptic vesicle exocytosis by binding to Munc18-1, an essential component of the synaptic vesicle exocytotic machinery. May modulate processing of the amyloid-beta precursor protein (APP) and hence formation of APP-beta.</text>
</comment>
<comment type="subunit">
    <text evidence="1 2">Part of a multimeric complex containing STXBP1 and STX1A. Interacts with STXBP1 (By similarity). Component of the brain-specific heterotrimeric complex (LIN-10-LIN-2-LIN-7 complex) composed of at least APBA1, CASK, and LIN7, which associates with the motor protein KIF17 to transport vesicles along microtubules (By similarity). Within the complex, interacts (via PDZ domain) with the motor protein KIF17; the interaction is direct and is required for association of KIF17 with the cargo that is to be transported (By similarity). Binds to the cytoplasmic domain of amyloid protein (APP) (By similarity). Interacts (via PDZ 1 and 2 domains) with FSPB (By similarity). Isoform 2 interacts (via its truncated PID domain) with active, GTP-bound RAB6A and RAB6B (By similarity).</text>
</comment>
<comment type="interaction">
    <interactant intactId="EBI-704760">
        <id>O35430</id>
    </interactant>
    <interactant intactId="EBI-539720">
        <id>P32851</id>
        <label>Stx1a</label>
    </interactant>
    <organismsDiffer>false</organismsDiffer>
    <experiments>3</experiments>
</comment>
<comment type="interaction">
    <interactant intactId="EBI-704760">
        <id>O35430</id>
    </interactant>
    <interactant intactId="EBI-1029097">
        <id>P61765</id>
        <label>Stxbp1</label>
    </interactant>
    <organismsDiffer>false</organismsDiffer>
    <experiments>5</experiments>
</comment>
<comment type="subcellular location">
    <subcellularLocation>
        <location evidence="1">Cytoplasm</location>
    </subcellularLocation>
    <subcellularLocation>
        <location evidence="1">Cytoplasm</location>
        <location evidence="1">Perinuclear region</location>
    </subcellularLocation>
    <subcellularLocation>
        <location evidence="7">Nucleus</location>
    </subcellularLocation>
    <text>Only a small proportion of the protein is nuclear.</text>
</comment>
<comment type="subcellular location">
    <molecule>Isoform 2</molecule>
    <subcellularLocation>
        <location evidence="1">Golgi apparatus</location>
    </subcellularLocation>
</comment>
<comment type="alternative products">
    <event type="alternative splicing"/>
    <isoform>
        <id>O35430-1</id>
        <name>1</name>
        <sequence type="displayed"/>
    </isoform>
    <isoform>
        <id>O35430-2</id>
        <name>2</name>
        <name>Mint1_826</name>
        <sequence type="described" ref="VSP_053520"/>
    </isoform>
</comment>
<comment type="tissue specificity">
    <text>Brain. Detected in the cerebellum, hippocampus, olfactory system, piriform and entorhinal cortex, supraoptic nucleus of the hypothalamus, substantia nigra, and other mesencephalic areas.</text>
</comment>
<comment type="domain">
    <text evidence="1">Composed of an N-terminal domain that binds Munc18-1 and LIN-2/CASK, a middle phosphotyrosine-binding domain (PID/PTB) that mediates binding with the cytoplasmic domain of the amyloid-beta precursor protein, and two C-terminal PDZ domains thought to attach proteins to the plasma membrane.</text>
</comment>
<comment type="domain">
    <text>The autoinhibitory helix linker occludes the APP binding site.</text>
</comment>
<comment type="domain">
    <text evidence="1">The PID domain, truncated by 11 amino acids, as observed in isoform 2, but not full-length, mediates the interaction with RAB6A.</text>
</comment>
<comment type="miscellaneous">
    <molecule>Isoform 2</molecule>
    <text evidence="1">This isoform interacts with RAB6 GTPases.</text>
</comment>
<proteinExistence type="evidence at protein level"/>
<reference key="1">
    <citation type="journal article" date="1997" name="J. Biol. Chem.">
        <title>Mints, Munc18-interacting proteins in synaptic vesicle exocytosis.</title>
        <authorList>
            <person name="Okamoto M."/>
            <person name="Suedhof T.C."/>
        </authorList>
    </citation>
    <scope>NUCLEOTIDE SEQUENCE [MRNA] (ISOFORM 1)</scope>
    <source>
        <tissue>Brain</tissue>
    </source>
</reference>
<reference key="2">
    <citation type="journal article" date="1998" name="Cell">
        <title>A tripartite protein complex with the potential to couple synaptic vesicle exocytosis to cell adhesion in brain.</title>
        <authorList>
            <person name="Butz S."/>
            <person name="Okamoto M."/>
            <person name="Suedhof T.C."/>
        </authorList>
    </citation>
    <scope>INTERACTION WITH CASK AND LIN7</scope>
    <source>
        <tissue>Testis</tissue>
    </source>
</reference>
<reference key="3">
    <citation type="journal article" date="2010" name="NeuroReport">
        <title>An X11alpha/FSBP complex represses transcription of the GSK3beta gene promoter.</title>
        <authorList>
            <person name="Lau K.F."/>
            <person name="Perkinton M.S."/>
            <person name="Rodriguez L."/>
            <person name="McLoughlin D.M."/>
            <person name="Miller C.C."/>
        </authorList>
    </citation>
    <scope>SUBCELLULAR LOCATION</scope>
    <scope>INTERACTION WITH FSBP</scope>
</reference>
<reference key="4">
    <citation type="journal article" date="2012" name="Nat. Commun.">
        <title>Quantitative maps of protein phosphorylation sites across 14 different rat organs and tissues.</title>
        <authorList>
            <person name="Lundby A."/>
            <person name="Secher A."/>
            <person name="Lage K."/>
            <person name="Nordsborg N.B."/>
            <person name="Dmytriyev A."/>
            <person name="Lundby C."/>
            <person name="Olsen J.V."/>
        </authorList>
    </citation>
    <scope>PHOSPHORYLATION [LARGE SCALE ANALYSIS] AT SER-243; SER-247; SER-249; SER-264; SER-286; SER-314 AND SER-570</scope>
    <scope>IDENTIFICATION BY MASS SPECTROMETRY [LARGE SCALE ANALYSIS]</scope>
</reference>
<reference key="5">
    <citation type="journal article" date="2012" name="Proc. Natl. Acad. Sci. U.S.A.">
        <title>Autoinhibition of Mint1 adaptor protein regulates amyloid precursor protein binding and processing.</title>
        <authorList>
            <person name="Matos M.F."/>
            <person name="Xu Y."/>
            <person name="Dulubova I."/>
            <person name="Otwinowski Z."/>
            <person name="Richardson J.M."/>
            <person name="Tomchick D.R."/>
            <person name="Rizo J."/>
            <person name="Ho A."/>
        </authorList>
    </citation>
    <scope>X-RAY CRYSTALLOGRAPHY (1.9 ANGSTROMS) OF 453-643</scope>
    <scope>AUTOINHIBITORY DOMAIN</scope>
    <scope>MUTAGENESIS OF TYR-633</scope>
    <scope>INTERACTION WITH APP</scope>
</reference>
<sequence>MNHLEGSAEVEVADEAPGGEVNESVEADLEHPEVEEEQQPSPPPPAGHAPEDHRAHPAPPPPPPPQEEEEERGECLARSASTESGFHNHTDTAEGDVLAAARDGYEAERAQDADDESAYAVQYRPEAEEYTEQAEAEHAEAAQRRALPNHLHFHSLEHEEAMNAAYSGYVYTHRLFHRAEDEPYAEPYADYGGLQEHVYEEIGDAPELEARDGLRLYERERDEAAAYRQEALGARLHHYDERSDGESDSPEKEAEFAPYPRMDSYEQEEDIDQIVAEVKQSMSSQSLDKAAEDMPEAEQDLERAPTPGGGHPDSPGLPAPAGQQQRVVGTPGGSEVGQRYSKEKRDAISLAIKDIKEAIEEVKTRTIRSPYTPDEPKEPIWVMRQDISPTRDCDDQRPVDGDSPSPGSSSPLGAESSITPLHPGDPTEASTNKESRKSLASFPTYVEVPGPCDPEDLIDGIIFAANYLGSTQLLSDKTPSKNVRMMQAQEAVSRIKTAQKLAKSRKKAPEGESQPMTEVDLFISTQRIKVLNADTQEPMMDHPLRTISYIADIGNIVVLMARRRMPRSNSQENVEASHPSQDAKRQYKMICHVFESEDAQLIAQSIGQAFSVAYQEFLRANGINPEDLSQKEYSDLLNTQDMYNDDLIHFSKSENCKDVFIEKQKGEILGVVIVESGWGSILPTVIIANMMHGGPAEKSGKLNIGDQIMSINGTSLVGLPLSTCQSIIKGLKNQSRVKLNIVRCPPVTTVLIRRPDLRYQLGFSVQNGIICSLMRGGIAERGGVRVGHRIIEINGQSVVATPHEKIVHILSNAVGEIHMKTMPAAMYRLLTAQEQPVYI</sequence>
<evidence type="ECO:0000250" key="1"/>
<evidence type="ECO:0000250" key="2">
    <source>
        <dbReference type="UniProtKB" id="B2RUJ5"/>
    </source>
</evidence>
<evidence type="ECO:0000250" key="3">
    <source>
        <dbReference type="UniProtKB" id="Q02410"/>
    </source>
</evidence>
<evidence type="ECO:0000255" key="4">
    <source>
        <dbReference type="PROSITE-ProRule" id="PRU00143"/>
    </source>
</evidence>
<evidence type="ECO:0000255" key="5">
    <source>
        <dbReference type="PROSITE-ProRule" id="PRU00148"/>
    </source>
</evidence>
<evidence type="ECO:0000256" key="6">
    <source>
        <dbReference type="SAM" id="MobiDB-lite"/>
    </source>
</evidence>
<evidence type="ECO:0000269" key="7">
    <source>
    </source>
</evidence>
<evidence type="ECO:0000269" key="8">
    <source>
    </source>
</evidence>
<evidence type="ECO:0000305" key="9"/>
<evidence type="ECO:0007744" key="10">
    <source>
    </source>
</evidence>
<evidence type="ECO:0007829" key="11">
    <source>
        <dbReference type="PDB" id="4DBB"/>
    </source>
</evidence>
<evidence type="ECO:0007829" key="12">
    <source>
        <dbReference type="PDB" id="6KMH"/>
    </source>
</evidence>
<evidence type="ECO:0007829" key="13">
    <source>
        <dbReference type="PDB" id="7XSJ"/>
    </source>
</evidence>
<name>APBA1_RAT</name>
<dbReference type="EMBL" id="AF029105">
    <property type="protein sequence ID" value="AAC05303.1"/>
    <property type="molecule type" value="mRNA"/>
</dbReference>
<dbReference type="RefSeq" id="NP_113967.1">
    <property type="nucleotide sequence ID" value="NM_031779.2"/>
</dbReference>
<dbReference type="PDB" id="4DBB">
    <property type="method" value="X-ray"/>
    <property type="resolution" value="1.90 A"/>
    <property type="chains" value="A=453-643"/>
</dbReference>
<dbReference type="PDB" id="6KMH">
    <property type="method" value="X-ray"/>
    <property type="resolution" value="2.40 A"/>
    <property type="chains" value="C/D=338-397"/>
</dbReference>
<dbReference type="PDB" id="7XSJ">
    <property type="method" value="X-ray"/>
    <property type="resolution" value="3.20 A"/>
    <property type="chains" value="C=227-303"/>
</dbReference>
<dbReference type="PDBsum" id="4DBB"/>
<dbReference type="PDBsum" id="6KMH"/>
<dbReference type="PDBsum" id="7XSJ"/>
<dbReference type="BMRB" id="O35430"/>
<dbReference type="SMR" id="O35430"/>
<dbReference type="BioGRID" id="249774">
    <property type="interactions" value="7"/>
</dbReference>
<dbReference type="CORUM" id="O35430"/>
<dbReference type="ELM" id="O35430"/>
<dbReference type="FunCoup" id="O35430">
    <property type="interactions" value="1593"/>
</dbReference>
<dbReference type="IntAct" id="O35430">
    <property type="interactions" value="3"/>
</dbReference>
<dbReference type="MINT" id="O35430"/>
<dbReference type="STRING" id="10116.ENSRNOP00000020123"/>
<dbReference type="BindingDB" id="O35430"/>
<dbReference type="CarbonylDB" id="O35430"/>
<dbReference type="GlyGen" id="O35430">
    <property type="glycosylation" value="1 site"/>
</dbReference>
<dbReference type="iPTMnet" id="O35430"/>
<dbReference type="PhosphoSitePlus" id="O35430"/>
<dbReference type="PaxDb" id="10116-ENSRNOP00000020123"/>
<dbReference type="PeptideAtlas" id="O35430"/>
<dbReference type="GeneID" id="83589"/>
<dbReference type="KEGG" id="rno:83589"/>
<dbReference type="UCSC" id="RGD:620844">
    <molecule id="O35430-1"/>
    <property type="organism name" value="rat"/>
</dbReference>
<dbReference type="AGR" id="RGD:620844"/>
<dbReference type="CTD" id="320"/>
<dbReference type="RGD" id="620844">
    <property type="gene designation" value="Apba1"/>
</dbReference>
<dbReference type="eggNOG" id="KOG3605">
    <property type="taxonomic scope" value="Eukaryota"/>
</dbReference>
<dbReference type="InParanoid" id="O35430"/>
<dbReference type="OrthoDB" id="5987010at2759"/>
<dbReference type="PhylomeDB" id="O35430"/>
<dbReference type="Reactome" id="R-RNO-212676">
    <property type="pathway name" value="Dopamine Neurotransmitter Release Cycle"/>
</dbReference>
<dbReference type="EvolutionaryTrace" id="O35430"/>
<dbReference type="PRO" id="PR:O35430"/>
<dbReference type="Proteomes" id="UP000002494">
    <property type="component" value="Unplaced"/>
</dbReference>
<dbReference type="GO" id="GO:0005737">
    <property type="term" value="C:cytoplasm"/>
    <property type="evidence" value="ECO:0000318"/>
    <property type="project" value="GO_Central"/>
</dbReference>
<dbReference type="GO" id="GO:0005829">
    <property type="term" value="C:cytosol"/>
    <property type="evidence" value="ECO:0000304"/>
    <property type="project" value="Reactome"/>
</dbReference>
<dbReference type="GO" id="GO:0043197">
    <property type="term" value="C:dendritic spine"/>
    <property type="evidence" value="ECO:0000314"/>
    <property type="project" value="CACAO"/>
</dbReference>
<dbReference type="GO" id="GO:0098978">
    <property type="term" value="C:glutamatergic synapse"/>
    <property type="evidence" value="ECO:0000266"/>
    <property type="project" value="RGD"/>
</dbReference>
<dbReference type="GO" id="GO:0005794">
    <property type="term" value="C:Golgi apparatus"/>
    <property type="evidence" value="ECO:0007669"/>
    <property type="project" value="UniProtKB-SubCell"/>
</dbReference>
<dbReference type="GO" id="GO:0016020">
    <property type="term" value="C:membrane"/>
    <property type="evidence" value="ECO:0000266"/>
    <property type="project" value="RGD"/>
</dbReference>
<dbReference type="GO" id="GO:0005634">
    <property type="term" value="C:nucleus"/>
    <property type="evidence" value="ECO:0007669"/>
    <property type="project" value="UniProtKB-SubCell"/>
</dbReference>
<dbReference type="GO" id="GO:0048471">
    <property type="term" value="C:perinuclear region of cytoplasm"/>
    <property type="evidence" value="ECO:0007669"/>
    <property type="project" value="UniProtKB-SubCell"/>
</dbReference>
<dbReference type="GO" id="GO:0005886">
    <property type="term" value="C:plasma membrane"/>
    <property type="evidence" value="ECO:0000318"/>
    <property type="project" value="GO_Central"/>
</dbReference>
<dbReference type="GO" id="GO:0048787">
    <property type="term" value="C:presynaptic active zone membrane"/>
    <property type="evidence" value="ECO:0000266"/>
    <property type="project" value="RGD"/>
</dbReference>
<dbReference type="GO" id="GO:0032991">
    <property type="term" value="C:protein-containing complex"/>
    <property type="evidence" value="ECO:0000314"/>
    <property type="project" value="RGD"/>
</dbReference>
<dbReference type="GO" id="GO:0098685">
    <property type="term" value="C:Schaffer collateral - CA1 synapse"/>
    <property type="evidence" value="ECO:0000266"/>
    <property type="project" value="RGD"/>
</dbReference>
<dbReference type="GO" id="GO:0001540">
    <property type="term" value="F:amyloid-beta binding"/>
    <property type="evidence" value="ECO:0000353"/>
    <property type="project" value="RGD"/>
</dbReference>
<dbReference type="GO" id="GO:0030165">
    <property type="term" value="F:PDZ domain binding"/>
    <property type="evidence" value="ECO:0000353"/>
    <property type="project" value="RGD"/>
</dbReference>
<dbReference type="GO" id="GO:0005546">
    <property type="term" value="F:phosphatidylinositol-4,5-bisphosphate binding"/>
    <property type="evidence" value="ECO:0000314"/>
    <property type="project" value="RGD"/>
</dbReference>
<dbReference type="GO" id="GO:0019901">
    <property type="term" value="F:protein kinase binding"/>
    <property type="evidence" value="ECO:0000353"/>
    <property type="project" value="RGD"/>
</dbReference>
<dbReference type="GO" id="GO:0044877">
    <property type="term" value="F:protein-containing complex binding"/>
    <property type="evidence" value="ECO:0000314"/>
    <property type="project" value="RGD"/>
</dbReference>
<dbReference type="GO" id="GO:0007268">
    <property type="term" value="P:chemical synaptic transmission"/>
    <property type="evidence" value="ECO:0000266"/>
    <property type="project" value="RGD"/>
</dbReference>
<dbReference type="GO" id="GO:0051649">
    <property type="term" value="P:establishment of localization in cell"/>
    <property type="evidence" value="ECO:0000266"/>
    <property type="project" value="RGD"/>
</dbReference>
<dbReference type="GO" id="GO:0014051">
    <property type="term" value="P:gamma-aminobutyric acid secretion"/>
    <property type="evidence" value="ECO:0000266"/>
    <property type="project" value="RGD"/>
</dbReference>
<dbReference type="GO" id="GO:0014047">
    <property type="term" value="P:glutamate secretion"/>
    <property type="evidence" value="ECO:0000266"/>
    <property type="project" value="RGD"/>
</dbReference>
<dbReference type="GO" id="GO:0001701">
    <property type="term" value="P:in utero embryonic development"/>
    <property type="evidence" value="ECO:0000266"/>
    <property type="project" value="RGD"/>
</dbReference>
<dbReference type="GO" id="GO:0006886">
    <property type="term" value="P:intracellular protein transport"/>
    <property type="evidence" value="ECO:0000266"/>
    <property type="project" value="RGD"/>
</dbReference>
<dbReference type="GO" id="GO:0007626">
    <property type="term" value="P:locomotory behavior"/>
    <property type="evidence" value="ECO:0000266"/>
    <property type="project" value="RGD"/>
</dbReference>
<dbReference type="GO" id="GO:0035264">
    <property type="term" value="P:multicellular organism growth"/>
    <property type="evidence" value="ECO:0000266"/>
    <property type="project" value="RGD"/>
</dbReference>
<dbReference type="GO" id="GO:0099171">
    <property type="term" value="P:presynaptic modulation of chemical synaptic transmission"/>
    <property type="evidence" value="ECO:0000266"/>
    <property type="project" value="RGD"/>
</dbReference>
<dbReference type="GO" id="GO:0010468">
    <property type="term" value="P:regulation of gene expression"/>
    <property type="evidence" value="ECO:0000266"/>
    <property type="project" value="RGD"/>
</dbReference>
<dbReference type="GO" id="GO:0016079">
    <property type="term" value="P:synaptic vesicle exocytosis"/>
    <property type="evidence" value="ECO:0000304"/>
    <property type="project" value="RGD"/>
</dbReference>
<dbReference type="CDD" id="cd22578">
    <property type="entry name" value="Mint1_CID"/>
    <property type="match status" value="1"/>
</dbReference>
<dbReference type="CDD" id="cd06720">
    <property type="entry name" value="PDZ1_APBA1_3-like"/>
    <property type="match status" value="1"/>
</dbReference>
<dbReference type="CDD" id="cd06793">
    <property type="entry name" value="PDZ2_APBA1_3-like"/>
    <property type="match status" value="1"/>
</dbReference>
<dbReference type="CDD" id="cd01208">
    <property type="entry name" value="PTB_X11"/>
    <property type="match status" value="1"/>
</dbReference>
<dbReference type="FunFam" id="2.30.29.30:FF:000044">
    <property type="entry name" value="amyloid beta A4 precursor protein-binding family A member 1"/>
    <property type="match status" value="1"/>
</dbReference>
<dbReference type="FunFam" id="2.30.42.10:FF:000007">
    <property type="entry name" value="Amyloid beta A4 protein-binding family A member"/>
    <property type="match status" value="1"/>
</dbReference>
<dbReference type="FunFam" id="2.30.42.10:FF:000017">
    <property type="entry name" value="Amyloid beta A4 protein-binding family A member 1"/>
    <property type="match status" value="1"/>
</dbReference>
<dbReference type="Gene3D" id="2.30.42.10">
    <property type="match status" value="2"/>
</dbReference>
<dbReference type="Gene3D" id="2.30.29.30">
    <property type="entry name" value="Pleckstrin-homology domain (PH domain)/Phosphotyrosine-binding domain (PTB)"/>
    <property type="match status" value="1"/>
</dbReference>
<dbReference type="InterPro" id="IPR051230">
    <property type="entry name" value="APP-Binding"/>
</dbReference>
<dbReference type="InterPro" id="IPR001478">
    <property type="entry name" value="PDZ"/>
</dbReference>
<dbReference type="InterPro" id="IPR036034">
    <property type="entry name" value="PDZ_sf"/>
</dbReference>
<dbReference type="InterPro" id="IPR011993">
    <property type="entry name" value="PH-like_dom_sf"/>
</dbReference>
<dbReference type="InterPro" id="IPR006020">
    <property type="entry name" value="PTB/PI_dom"/>
</dbReference>
<dbReference type="PANTHER" id="PTHR12345:SF14">
    <property type="entry name" value="AMYLOID-BETA A4 PRECURSOR PROTEIN-BINDING FAMILY A MEMBER 1"/>
    <property type="match status" value="1"/>
</dbReference>
<dbReference type="PANTHER" id="PTHR12345">
    <property type="entry name" value="SYNTENIN RELATED"/>
    <property type="match status" value="1"/>
</dbReference>
<dbReference type="Pfam" id="PF00595">
    <property type="entry name" value="PDZ"/>
    <property type="match status" value="2"/>
</dbReference>
<dbReference type="Pfam" id="PF00640">
    <property type="entry name" value="PID"/>
    <property type="match status" value="1"/>
</dbReference>
<dbReference type="SMART" id="SM00228">
    <property type="entry name" value="PDZ"/>
    <property type="match status" value="2"/>
</dbReference>
<dbReference type="SMART" id="SM00462">
    <property type="entry name" value="PTB"/>
    <property type="match status" value="1"/>
</dbReference>
<dbReference type="SUPFAM" id="SSF50156">
    <property type="entry name" value="PDZ domain-like"/>
    <property type="match status" value="2"/>
</dbReference>
<dbReference type="SUPFAM" id="SSF50729">
    <property type="entry name" value="PH domain-like"/>
    <property type="match status" value="1"/>
</dbReference>
<dbReference type="PROSITE" id="PS50106">
    <property type="entry name" value="PDZ"/>
    <property type="match status" value="2"/>
</dbReference>
<dbReference type="PROSITE" id="PS01179">
    <property type="entry name" value="PID"/>
    <property type="match status" value="1"/>
</dbReference>
<protein>
    <recommendedName>
        <fullName>Amyloid-beta A4 precursor protein-binding family A member 1</fullName>
    </recommendedName>
    <alternativeName>
        <fullName>Adapter protein X11alpha</fullName>
    </alternativeName>
    <alternativeName>
        <fullName>Neuron-specific X11 protein</fullName>
    </alternativeName>
    <alternativeName>
        <fullName>Neuronal Munc18-1-interacting protein 1</fullName>
        <shortName>Mint-1</shortName>
    </alternativeName>
</protein>
<gene>
    <name type="primary">Apba1</name>
    <name type="synonym">Mint1</name>
    <name type="synonym">X11</name>
</gene>
<keyword id="KW-0002">3D-structure</keyword>
<keyword id="KW-0025">Alternative splicing</keyword>
<keyword id="KW-0963">Cytoplasm</keyword>
<keyword id="KW-0333">Golgi apparatus</keyword>
<keyword id="KW-0539">Nucleus</keyword>
<keyword id="KW-0597">Phosphoprotein</keyword>
<keyword id="KW-0653">Protein transport</keyword>
<keyword id="KW-1185">Reference proteome</keyword>
<keyword id="KW-0677">Repeat</keyword>
<keyword id="KW-0813">Transport</keyword>
<accession>O35430</accession>
<feature type="chain" id="PRO_0000064615" description="Amyloid-beta A4 precursor protein-binding family A member 1">
    <location>
        <begin position="1"/>
        <end position="839"/>
    </location>
</feature>
<feature type="domain" description="PID" evidence="5">
    <location>
        <begin position="459"/>
        <end position="645"/>
    </location>
</feature>
<feature type="domain" description="PDZ 1" evidence="4">
    <location>
        <begin position="658"/>
        <end position="744"/>
    </location>
</feature>
<feature type="domain" description="PDZ 2" evidence="4">
    <location>
        <begin position="749"/>
        <end position="824"/>
    </location>
</feature>
<feature type="region of interest" description="Disordered" evidence="6">
    <location>
        <begin position="1"/>
        <end position="118"/>
    </location>
</feature>
<feature type="region of interest" description="Munc-18-1 binding">
    <location>
        <begin position="227"/>
        <end position="315"/>
    </location>
</feature>
<feature type="region of interest" description="Disordered" evidence="6">
    <location>
        <begin position="235"/>
        <end position="346"/>
    </location>
</feature>
<feature type="region of interest" description="Disordered" evidence="6">
    <location>
        <begin position="362"/>
        <end position="437"/>
    </location>
</feature>
<feature type="region of interest" description="LIN-2/CASK binding">
    <location>
        <begin position="375"/>
        <end position="438"/>
    </location>
</feature>
<feature type="region of interest" description="Autoinhibitory helix linker">
    <location>
        <begin position="628"/>
        <end position="643"/>
    </location>
</feature>
<feature type="compositionally biased region" description="Acidic residues" evidence="6">
    <location>
        <begin position="23"/>
        <end position="38"/>
    </location>
</feature>
<feature type="compositionally biased region" description="Basic and acidic residues" evidence="6">
    <location>
        <begin position="103"/>
        <end position="112"/>
    </location>
</feature>
<feature type="compositionally biased region" description="Basic and acidic residues" evidence="6">
    <location>
        <begin position="237"/>
        <end position="255"/>
    </location>
</feature>
<feature type="compositionally biased region" description="Basic and acidic residues" evidence="6">
    <location>
        <begin position="389"/>
        <end position="400"/>
    </location>
</feature>
<feature type="compositionally biased region" description="Low complexity" evidence="6">
    <location>
        <begin position="401"/>
        <end position="417"/>
    </location>
</feature>
<feature type="modified residue" description="Phosphoserine" evidence="2">
    <location>
        <position position="79"/>
    </location>
</feature>
<feature type="modified residue" description="Phosphoserine" evidence="10">
    <location>
        <position position="243"/>
    </location>
</feature>
<feature type="modified residue" description="Phosphoserine" evidence="10">
    <location>
        <position position="247"/>
    </location>
</feature>
<feature type="modified residue" description="Phosphoserine" evidence="10">
    <location>
        <position position="249"/>
    </location>
</feature>
<feature type="modified residue" description="Phosphoserine" evidence="10">
    <location>
        <position position="264"/>
    </location>
</feature>
<feature type="modified residue" description="Phosphoserine" evidence="2">
    <location>
        <position position="281"/>
    </location>
</feature>
<feature type="modified residue" description="Phosphoserine" evidence="10">
    <location>
        <position position="286"/>
    </location>
</feature>
<feature type="modified residue" description="Phosphothreonine" evidence="3">
    <location>
        <position position="306"/>
    </location>
</feature>
<feature type="modified residue" description="Phosphoserine" evidence="10">
    <location>
        <position position="314"/>
    </location>
</feature>
<feature type="modified residue" description="Phosphoserine" evidence="2">
    <location>
        <position position="369"/>
    </location>
</feature>
<feature type="modified residue" description="Phosphothreonine" evidence="3">
    <location>
        <position position="372"/>
    </location>
</feature>
<feature type="modified residue" description="Phosphoserine" evidence="2">
    <location>
        <position position="403"/>
    </location>
</feature>
<feature type="modified residue" description="Phosphoserine" evidence="2">
    <location>
        <position position="405"/>
    </location>
</feature>
<feature type="modified residue" description="Phosphoserine" evidence="2">
    <location>
        <position position="410"/>
    </location>
</feature>
<feature type="modified residue" description="Phosphoserine" evidence="10">
    <location>
        <position position="570"/>
    </location>
</feature>
<feature type="splice variant" id="VSP_053520" description="In isoform 2." evidence="9">
    <location>
        <begin position="497"/>
        <end position="507"/>
    </location>
</feature>
<feature type="mutagenesis site" description="Enhanced APP binding and amyloid-beta production." evidence="8">
    <original>Y</original>
    <variation>E</variation>
    <location>
        <position position="633"/>
    </location>
</feature>
<feature type="mutagenesis site" description="No change in APP binding." evidence="8">
    <original>Y</original>
    <variation>F</variation>
    <location>
        <position position="633"/>
    </location>
</feature>
<feature type="helix" evidence="13">
    <location>
        <begin position="271"/>
        <end position="282"/>
    </location>
</feature>
<feature type="helix" evidence="12">
    <location>
        <begin position="342"/>
        <end position="364"/>
    </location>
</feature>
<feature type="strand" evidence="11">
    <location>
        <begin position="460"/>
        <end position="477"/>
    </location>
</feature>
<feature type="helix" evidence="11">
    <location>
        <begin position="481"/>
        <end position="493"/>
    </location>
</feature>
<feature type="strand" evidence="11">
    <location>
        <begin position="517"/>
        <end position="532"/>
    </location>
</feature>
<feature type="turn" evidence="11">
    <location>
        <begin position="533"/>
        <end position="535"/>
    </location>
</feature>
<feature type="strand" evidence="11">
    <location>
        <begin position="538"/>
        <end position="543"/>
    </location>
</feature>
<feature type="helix" evidence="11">
    <location>
        <begin position="544"/>
        <end position="546"/>
    </location>
</feature>
<feature type="strand" evidence="11">
    <location>
        <begin position="547"/>
        <end position="553"/>
    </location>
</feature>
<feature type="strand" evidence="11">
    <location>
        <begin position="556"/>
        <end position="563"/>
    </location>
</feature>
<feature type="strand" evidence="11">
    <location>
        <begin position="587"/>
        <end position="595"/>
    </location>
</feature>
<feature type="helix" evidence="11">
    <location>
        <begin position="599"/>
        <end position="614"/>
    </location>
</feature>
<feature type="helix" evidence="11">
    <location>
        <begin position="615"/>
        <end position="617"/>
    </location>
</feature>
<feature type="helix" evidence="11">
    <location>
        <begin position="625"/>
        <end position="627"/>
    </location>
</feature>
<feature type="helix" evidence="11">
    <location>
        <begin position="630"/>
        <end position="639"/>
    </location>
</feature>
<organism>
    <name type="scientific">Rattus norvegicus</name>
    <name type="common">Rat</name>
    <dbReference type="NCBI Taxonomy" id="10116"/>
    <lineage>
        <taxon>Eukaryota</taxon>
        <taxon>Metazoa</taxon>
        <taxon>Chordata</taxon>
        <taxon>Craniata</taxon>
        <taxon>Vertebrata</taxon>
        <taxon>Euteleostomi</taxon>
        <taxon>Mammalia</taxon>
        <taxon>Eutheria</taxon>
        <taxon>Euarchontoglires</taxon>
        <taxon>Glires</taxon>
        <taxon>Rodentia</taxon>
        <taxon>Myomorpha</taxon>
        <taxon>Muroidea</taxon>
        <taxon>Muridae</taxon>
        <taxon>Murinae</taxon>
        <taxon>Rattus</taxon>
    </lineage>
</organism>